<accession>Q71QJ2</accession>
<protein>
    <recommendedName>
        <fullName>Snake venom serine protease KN6</fullName>
        <shortName>SVSP</shortName>
        <ecNumber>3.4.21.-</ecNumber>
    </recommendedName>
</protein>
<sequence length="260" mass="28541">MVLIRVLANLLILQLSYAQKSSELVIGGDECNINEHRFLVALYDVSSGDFRGSGTLINPEWVLTAAHCETEEMKLQFGLHSKRVPNKDKQTRVSKEKFFCESNKNYTKWNKDIMLIKLNRPVKNSAHIEPLSLPSSPPSVGSVCRIMGWGTLSDTEMILPDVPHCANINLLNYSDCQAAYPELPAKSRTLCAGILEGGKDTCSGDSGGPLICNGTFQGIASWGSTLCGYVREPGSYTKVFDHLDWIQSIIAGNTNVTCPL</sequence>
<name>VSP06_TRIST</name>
<feature type="signal peptide" evidence="2">
    <location>
        <begin position="1"/>
        <end position="18"/>
    </location>
</feature>
<feature type="propeptide" id="PRO_0000295831" evidence="1">
    <location>
        <begin position="19"/>
        <end position="24"/>
    </location>
</feature>
<feature type="chain" id="PRO_5000061217" description="Snake venom serine protease KN6">
    <location>
        <begin position="25"/>
        <end position="260"/>
    </location>
</feature>
<feature type="domain" description="Peptidase S1" evidence="3">
    <location>
        <begin position="25"/>
        <end position="251"/>
    </location>
</feature>
<feature type="active site" description="Charge relay system" evidence="1">
    <location>
        <position position="67"/>
    </location>
</feature>
<feature type="active site" description="Charge relay system" evidence="1">
    <location>
        <position position="112"/>
    </location>
</feature>
<feature type="active site" description="Charge relay system" evidence="1">
    <location>
        <position position="206"/>
    </location>
</feature>
<feature type="glycosylation site" description="N-linked (GlcNAc...) asparagine" evidence="2">
    <location>
        <position position="105"/>
    </location>
</feature>
<feature type="glycosylation site" description="N-linked (GlcNAc...) asparagine" evidence="2">
    <location>
        <position position="172"/>
    </location>
</feature>
<feature type="glycosylation site" description="N-linked (GlcNAc...) asparagine" evidence="2">
    <location>
        <position position="213"/>
    </location>
</feature>
<feature type="glycosylation site" description="N-linked (GlcNAc...) asparagine" evidence="2">
    <location>
        <position position="255"/>
    </location>
</feature>
<feature type="disulfide bond" evidence="3">
    <location>
        <begin position="31"/>
        <end position="165"/>
    </location>
</feature>
<feature type="disulfide bond" evidence="3">
    <location>
        <begin position="100"/>
        <end position="258"/>
    </location>
</feature>
<feature type="disulfide bond" evidence="3">
    <location>
        <begin position="144"/>
        <end position="212"/>
    </location>
</feature>
<feature type="disulfide bond" evidence="3">
    <location>
        <begin position="176"/>
        <end position="191"/>
    </location>
</feature>
<feature type="disulfide bond" evidence="3">
    <location>
        <begin position="202"/>
        <end position="227"/>
    </location>
</feature>
<dbReference type="EC" id="3.4.21.-"/>
<dbReference type="EMBL" id="AF395765">
    <property type="protein sequence ID" value="AAQ02895.1"/>
    <property type="molecule type" value="mRNA"/>
</dbReference>
<dbReference type="SMR" id="Q71QJ2"/>
<dbReference type="MEROPS" id="S01.497"/>
<dbReference type="GO" id="GO:0005576">
    <property type="term" value="C:extracellular region"/>
    <property type="evidence" value="ECO:0007669"/>
    <property type="project" value="UniProtKB-SubCell"/>
</dbReference>
<dbReference type="GO" id="GO:0030141">
    <property type="term" value="C:secretory granule"/>
    <property type="evidence" value="ECO:0007669"/>
    <property type="project" value="TreeGrafter"/>
</dbReference>
<dbReference type="GO" id="GO:0004252">
    <property type="term" value="F:serine-type endopeptidase activity"/>
    <property type="evidence" value="ECO:0007669"/>
    <property type="project" value="InterPro"/>
</dbReference>
<dbReference type="GO" id="GO:0090729">
    <property type="term" value="F:toxin activity"/>
    <property type="evidence" value="ECO:0007669"/>
    <property type="project" value="UniProtKB-KW"/>
</dbReference>
<dbReference type="GO" id="GO:0006508">
    <property type="term" value="P:proteolysis"/>
    <property type="evidence" value="ECO:0007669"/>
    <property type="project" value="UniProtKB-KW"/>
</dbReference>
<dbReference type="CDD" id="cd00190">
    <property type="entry name" value="Tryp_SPc"/>
    <property type="match status" value="1"/>
</dbReference>
<dbReference type="FunFam" id="2.40.10.10:FF:000158">
    <property type="entry name" value="Thrombin-like enzyme saxthrombin"/>
    <property type="match status" value="1"/>
</dbReference>
<dbReference type="Gene3D" id="2.40.10.10">
    <property type="entry name" value="Trypsin-like serine proteases"/>
    <property type="match status" value="2"/>
</dbReference>
<dbReference type="InterPro" id="IPR009003">
    <property type="entry name" value="Peptidase_S1_PA"/>
</dbReference>
<dbReference type="InterPro" id="IPR043504">
    <property type="entry name" value="Peptidase_S1_PA_chymotrypsin"/>
</dbReference>
<dbReference type="InterPro" id="IPR001314">
    <property type="entry name" value="Peptidase_S1A"/>
</dbReference>
<dbReference type="InterPro" id="IPR001254">
    <property type="entry name" value="Trypsin_dom"/>
</dbReference>
<dbReference type="InterPro" id="IPR018114">
    <property type="entry name" value="TRYPSIN_HIS"/>
</dbReference>
<dbReference type="InterPro" id="IPR033116">
    <property type="entry name" value="TRYPSIN_SER"/>
</dbReference>
<dbReference type="PANTHER" id="PTHR24271:SF47">
    <property type="entry name" value="KALLIKREIN-1"/>
    <property type="match status" value="1"/>
</dbReference>
<dbReference type="PANTHER" id="PTHR24271">
    <property type="entry name" value="KALLIKREIN-RELATED"/>
    <property type="match status" value="1"/>
</dbReference>
<dbReference type="Pfam" id="PF00089">
    <property type="entry name" value="Trypsin"/>
    <property type="match status" value="1"/>
</dbReference>
<dbReference type="PRINTS" id="PR00722">
    <property type="entry name" value="CHYMOTRYPSIN"/>
</dbReference>
<dbReference type="SMART" id="SM00020">
    <property type="entry name" value="Tryp_SPc"/>
    <property type="match status" value="1"/>
</dbReference>
<dbReference type="SUPFAM" id="SSF50494">
    <property type="entry name" value="Trypsin-like serine proteases"/>
    <property type="match status" value="1"/>
</dbReference>
<dbReference type="PROSITE" id="PS50240">
    <property type="entry name" value="TRYPSIN_DOM"/>
    <property type="match status" value="1"/>
</dbReference>
<dbReference type="PROSITE" id="PS00134">
    <property type="entry name" value="TRYPSIN_HIS"/>
    <property type="match status" value="1"/>
</dbReference>
<dbReference type="PROSITE" id="PS00135">
    <property type="entry name" value="TRYPSIN_SER"/>
    <property type="match status" value="1"/>
</dbReference>
<comment type="function">
    <text evidence="1">Snake venom serine protease that may act in the hemostasis system of the prey.</text>
</comment>
<comment type="subunit">
    <text evidence="1">Monomer.</text>
</comment>
<comment type="subcellular location">
    <subcellularLocation>
        <location evidence="1">Secreted</location>
    </subcellularLocation>
</comment>
<comment type="tissue specificity">
    <text>Expressed by the venom gland.</text>
</comment>
<comment type="similarity">
    <text evidence="3">Belongs to the peptidase S1 family. Snake venom subfamily.</text>
</comment>
<evidence type="ECO:0000250" key="1"/>
<evidence type="ECO:0000255" key="2"/>
<evidence type="ECO:0000255" key="3">
    <source>
        <dbReference type="PROSITE-ProRule" id="PRU00274"/>
    </source>
</evidence>
<proteinExistence type="evidence at transcript level"/>
<organism>
    <name type="scientific">Trimeresurus stejnegeri</name>
    <name type="common">Chinese green tree viper</name>
    <name type="synonym">Viridovipera stejnegeri</name>
    <dbReference type="NCBI Taxonomy" id="39682"/>
    <lineage>
        <taxon>Eukaryota</taxon>
        <taxon>Metazoa</taxon>
        <taxon>Chordata</taxon>
        <taxon>Craniata</taxon>
        <taxon>Vertebrata</taxon>
        <taxon>Euteleostomi</taxon>
        <taxon>Lepidosauria</taxon>
        <taxon>Squamata</taxon>
        <taxon>Bifurcata</taxon>
        <taxon>Unidentata</taxon>
        <taxon>Episquamata</taxon>
        <taxon>Toxicofera</taxon>
        <taxon>Serpentes</taxon>
        <taxon>Colubroidea</taxon>
        <taxon>Viperidae</taxon>
        <taxon>Crotalinae</taxon>
        <taxon>Trimeresurus</taxon>
    </lineage>
</organism>
<reference key="1">
    <citation type="submission" date="2001-06" db="EMBL/GenBank/DDBJ databases">
        <title>Identification of geographic variations and cloning of venom proteins of Trimeresurus stejnegeri: serine proteases and phospholipases.</title>
        <authorList>
            <person name="Tsai I.-H."/>
            <person name="Wang Y.-M."/>
        </authorList>
    </citation>
    <scope>NUCLEOTIDE SEQUENCE [MRNA]</scope>
    <source>
        <tissue>Venom gland</tissue>
    </source>
</reference>
<keyword id="KW-1015">Disulfide bond</keyword>
<keyword id="KW-0325">Glycoprotein</keyword>
<keyword id="KW-1199">Hemostasis impairing toxin</keyword>
<keyword id="KW-0378">Hydrolase</keyword>
<keyword id="KW-0645">Protease</keyword>
<keyword id="KW-0964">Secreted</keyword>
<keyword id="KW-0720">Serine protease</keyword>
<keyword id="KW-0732">Signal</keyword>
<keyword id="KW-0800">Toxin</keyword>
<keyword id="KW-0865">Zymogen</keyword>